<organism>
    <name type="scientific">Brucella anthropi (strain ATCC 49188 / DSM 6882 / CCUG 24695 / JCM 21032 / LMG 3331 / NBRC 15819 / NCTC 12168 / Alc 37)</name>
    <name type="common">Ochrobactrum anthropi</name>
    <dbReference type="NCBI Taxonomy" id="439375"/>
    <lineage>
        <taxon>Bacteria</taxon>
        <taxon>Pseudomonadati</taxon>
        <taxon>Pseudomonadota</taxon>
        <taxon>Alphaproteobacteria</taxon>
        <taxon>Hyphomicrobiales</taxon>
        <taxon>Brucellaceae</taxon>
        <taxon>Brucella/Ochrobactrum group</taxon>
        <taxon>Brucella</taxon>
    </lineage>
</organism>
<name>PUR5_BRUA4</name>
<gene>
    <name evidence="1" type="primary">purM</name>
    <name type="ordered locus">Oant_2576</name>
</gene>
<reference key="1">
    <citation type="journal article" date="2011" name="J. Bacteriol.">
        <title>Genome of Ochrobactrum anthropi ATCC 49188 T, a versatile opportunistic pathogen and symbiont of several eukaryotic hosts.</title>
        <authorList>
            <person name="Chain P.S."/>
            <person name="Lang D.M."/>
            <person name="Comerci D.J."/>
            <person name="Malfatti S.A."/>
            <person name="Vergez L.M."/>
            <person name="Shin M."/>
            <person name="Ugalde R.A."/>
            <person name="Garcia E."/>
            <person name="Tolmasky M.E."/>
        </authorList>
    </citation>
    <scope>NUCLEOTIDE SEQUENCE [LARGE SCALE GENOMIC DNA]</scope>
    <source>
        <strain>ATCC 49188 / DSM 6882 / CCUG 24695 / JCM 21032 / LMG 3331 / NBRC 15819 / NCTC 12168 / Alc 37</strain>
    </source>
</reference>
<sequence length="363" mass="37811">MTMENKPADKPVGQNGLTYAQAGVDIDAGNLMVEKIKPLVRSTRRPGADGEIGGFGGLFDLKAAGFKDPVLVAANDGVGTKLKIAIDADKHDTVGIDLVAMCVNDLVVQGAEPLFFLDYFATGKLSPDQGVDIVAGIAEGCRQAGSALIGGETAEMPGMYRDGDYDLAGFAVGAAERDRLLPRGDIAEGDVILGLASSGVHSNGFSLVRRIVELSGLGWKSDAPFQPGATLGEALLTPTRIYVKPLLAAIRASDGIKALAHITGGGFPDNIPRVLPEGLAAEIDLESISVPAVFSWLAKTGGVEPNEMLRTFNCGIGMIAVVKPEKVEEVVAALAAEGEKVVTLGQMVKRDKDGVVYKGTLSL</sequence>
<comment type="catalytic activity">
    <reaction evidence="1">
        <text>2-formamido-N(1)-(5-O-phospho-beta-D-ribosyl)acetamidine + ATP = 5-amino-1-(5-phospho-beta-D-ribosyl)imidazole + ADP + phosphate + H(+)</text>
        <dbReference type="Rhea" id="RHEA:23032"/>
        <dbReference type="ChEBI" id="CHEBI:15378"/>
        <dbReference type="ChEBI" id="CHEBI:30616"/>
        <dbReference type="ChEBI" id="CHEBI:43474"/>
        <dbReference type="ChEBI" id="CHEBI:137981"/>
        <dbReference type="ChEBI" id="CHEBI:147287"/>
        <dbReference type="ChEBI" id="CHEBI:456216"/>
        <dbReference type="EC" id="6.3.3.1"/>
    </reaction>
</comment>
<comment type="pathway">
    <text evidence="1">Purine metabolism; IMP biosynthesis via de novo pathway; 5-amino-1-(5-phospho-D-ribosyl)imidazole from N(2)-formyl-N(1)-(5-phospho-D-ribosyl)glycinamide: step 2/2.</text>
</comment>
<comment type="subcellular location">
    <subcellularLocation>
        <location evidence="1">Cytoplasm</location>
    </subcellularLocation>
</comment>
<comment type="similarity">
    <text evidence="1">Belongs to the AIR synthase family.</text>
</comment>
<proteinExistence type="inferred from homology"/>
<keyword id="KW-0067">ATP-binding</keyword>
<keyword id="KW-0963">Cytoplasm</keyword>
<keyword id="KW-0436">Ligase</keyword>
<keyword id="KW-0547">Nucleotide-binding</keyword>
<keyword id="KW-0658">Purine biosynthesis</keyword>
<keyword id="KW-1185">Reference proteome</keyword>
<dbReference type="EC" id="6.3.3.1" evidence="1"/>
<dbReference type="EMBL" id="CP000758">
    <property type="protein sequence ID" value="ABS15289.1"/>
    <property type="molecule type" value="Genomic_DNA"/>
</dbReference>
<dbReference type="RefSeq" id="WP_012092376.1">
    <property type="nucleotide sequence ID" value="NC_009667.1"/>
</dbReference>
<dbReference type="SMR" id="A6X235"/>
<dbReference type="STRING" id="439375.Oant_2576"/>
<dbReference type="KEGG" id="oan:Oant_2576"/>
<dbReference type="PATRIC" id="fig|439375.7.peg.2714"/>
<dbReference type="eggNOG" id="COG0150">
    <property type="taxonomic scope" value="Bacteria"/>
</dbReference>
<dbReference type="HOGENOM" id="CLU_047116_0_0_5"/>
<dbReference type="PhylomeDB" id="A6X235"/>
<dbReference type="UniPathway" id="UPA00074">
    <property type="reaction ID" value="UER00129"/>
</dbReference>
<dbReference type="Proteomes" id="UP000002301">
    <property type="component" value="Chromosome 1"/>
</dbReference>
<dbReference type="GO" id="GO:0005829">
    <property type="term" value="C:cytosol"/>
    <property type="evidence" value="ECO:0007669"/>
    <property type="project" value="TreeGrafter"/>
</dbReference>
<dbReference type="GO" id="GO:0005524">
    <property type="term" value="F:ATP binding"/>
    <property type="evidence" value="ECO:0007669"/>
    <property type="project" value="UniProtKB-KW"/>
</dbReference>
<dbReference type="GO" id="GO:0004637">
    <property type="term" value="F:phosphoribosylamine-glycine ligase activity"/>
    <property type="evidence" value="ECO:0007669"/>
    <property type="project" value="TreeGrafter"/>
</dbReference>
<dbReference type="GO" id="GO:0004641">
    <property type="term" value="F:phosphoribosylformylglycinamidine cyclo-ligase activity"/>
    <property type="evidence" value="ECO:0007669"/>
    <property type="project" value="UniProtKB-UniRule"/>
</dbReference>
<dbReference type="GO" id="GO:0006189">
    <property type="term" value="P:'de novo' IMP biosynthetic process"/>
    <property type="evidence" value="ECO:0007669"/>
    <property type="project" value="UniProtKB-UniRule"/>
</dbReference>
<dbReference type="GO" id="GO:0046084">
    <property type="term" value="P:adenine biosynthetic process"/>
    <property type="evidence" value="ECO:0007669"/>
    <property type="project" value="TreeGrafter"/>
</dbReference>
<dbReference type="CDD" id="cd02196">
    <property type="entry name" value="PurM"/>
    <property type="match status" value="1"/>
</dbReference>
<dbReference type="FunFam" id="3.30.1330.10:FF:000001">
    <property type="entry name" value="Phosphoribosylformylglycinamidine cyclo-ligase"/>
    <property type="match status" value="1"/>
</dbReference>
<dbReference type="FunFam" id="3.90.650.10:FF:000019">
    <property type="entry name" value="Trifunctional purine biosynthetic protein adenosine-3"/>
    <property type="match status" value="1"/>
</dbReference>
<dbReference type="Gene3D" id="3.90.650.10">
    <property type="entry name" value="PurM-like C-terminal domain"/>
    <property type="match status" value="1"/>
</dbReference>
<dbReference type="Gene3D" id="3.30.1330.10">
    <property type="entry name" value="PurM-like, N-terminal domain"/>
    <property type="match status" value="1"/>
</dbReference>
<dbReference type="HAMAP" id="MF_00741">
    <property type="entry name" value="AIRS"/>
    <property type="match status" value="1"/>
</dbReference>
<dbReference type="InterPro" id="IPR010918">
    <property type="entry name" value="PurM-like_C_dom"/>
</dbReference>
<dbReference type="InterPro" id="IPR036676">
    <property type="entry name" value="PurM-like_C_sf"/>
</dbReference>
<dbReference type="InterPro" id="IPR016188">
    <property type="entry name" value="PurM-like_N"/>
</dbReference>
<dbReference type="InterPro" id="IPR036921">
    <property type="entry name" value="PurM-like_N_sf"/>
</dbReference>
<dbReference type="InterPro" id="IPR004733">
    <property type="entry name" value="PurM_cligase"/>
</dbReference>
<dbReference type="NCBIfam" id="TIGR00878">
    <property type="entry name" value="purM"/>
    <property type="match status" value="1"/>
</dbReference>
<dbReference type="PANTHER" id="PTHR10520:SF12">
    <property type="entry name" value="TRIFUNCTIONAL PURINE BIOSYNTHETIC PROTEIN ADENOSINE-3"/>
    <property type="match status" value="1"/>
</dbReference>
<dbReference type="PANTHER" id="PTHR10520">
    <property type="entry name" value="TRIFUNCTIONAL PURINE BIOSYNTHETIC PROTEIN ADENOSINE-3-RELATED"/>
    <property type="match status" value="1"/>
</dbReference>
<dbReference type="Pfam" id="PF00586">
    <property type="entry name" value="AIRS"/>
    <property type="match status" value="1"/>
</dbReference>
<dbReference type="Pfam" id="PF02769">
    <property type="entry name" value="AIRS_C"/>
    <property type="match status" value="1"/>
</dbReference>
<dbReference type="SUPFAM" id="SSF56042">
    <property type="entry name" value="PurM C-terminal domain-like"/>
    <property type="match status" value="1"/>
</dbReference>
<dbReference type="SUPFAM" id="SSF55326">
    <property type="entry name" value="PurM N-terminal domain-like"/>
    <property type="match status" value="1"/>
</dbReference>
<evidence type="ECO:0000255" key="1">
    <source>
        <dbReference type="HAMAP-Rule" id="MF_00741"/>
    </source>
</evidence>
<protein>
    <recommendedName>
        <fullName evidence="1">Phosphoribosylformylglycinamidine cyclo-ligase</fullName>
        <ecNumber evidence="1">6.3.3.1</ecNumber>
    </recommendedName>
    <alternativeName>
        <fullName evidence="1">AIR synthase</fullName>
    </alternativeName>
    <alternativeName>
        <fullName evidence="1">AIRS</fullName>
    </alternativeName>
    <alternativeName>
        <fullName evidence="1">Phosphoribosyl-aminoimidazole synthetase</fullName>
    </alternativeName>
</protein>
<accession>A6X235</accession>
<feature type="chain" id="PRO_1000046452" description="Phosphoribosylformylglycinamidine cyclo-ligase">
    <location>
        <begin position="1"/>
        <end position="363"/>
    </location>
</feature>